<comment type="subunit">
    <text evidence="1">Forms oligomers.</text>
</comment>
<comment type="subcellular location">
    <subcellularLocation>
        <location evidence="1">Cytoplasm</location>
        <location evidence="1">Nucleoid</location>
    </subcellularLocation>
</comment>
<comment type="similarity">
    <text evidence="1">Belongs to the MraZ family.</text>
</comment>
<sequence length="152" mass="17637">MFRGASAINLDTKGRIAIPVRYREPLQLEHQGRIVITVDIQSACLLLYPIHEWELIEAKLLKLSDTDKTQRSLKRLLLGYAHEVELDGNGRILLPPPLRQYANLDKRIMLVGQLNKFELWDEQSWLQQIDECQETIRSEELASNERLADFSL</sequence>
<name>MRAZ_SHEB8</name>
<reference key="1">
    <citation type="submission" date="2007-07" db="EMBL/GenBank/DDBJ databases">
        <title>Complete sequence of chromosome of Shewanella baltica OS185.</title>
        <authorList>
            <consortium name="US DOE Joint Genome Institute"/>
            <person name="Copeland A."/>
            <person name="Lucas S."/>
            <person name="Lapidus A."/>
            <person name="Barry K."/>
            <person name="Glavina del Rio T."/>
            <person name="Dalin E."/>
            <person name="Tice H."/>
            <person name="Pitluck S."/>
            <person name="Sims D."/>
            <person name="Brettin T."/>
            <person name="Bruce D."/>
            <person name="Detter J.C."/>
            <person name="Han C."/>
            <person name="Schmutz J."/>
            <person name="Larimer F."/>
            <person name="Land M."/>
            <person name="Hauser L."/>
            <person name="Kyrpides N."/>
            <person name="Mikhailova N."/>
            <person name="Brettar I."/>
            <person name="Rodrigues J."/>
            <person name="Konstantinidis K."/>
            <person name="Tiedje J."/>
            <person name="Richardson P."/>
        </authorList>
    </citation>
    <scope>NUCLEOTIDE SEQUENCE [LARGE SCALE GENOMIC DNA]</scope>
    <source>
        <strain>OS185</strain>
    </source>
</reference>
<organism>
    <name type="scientific">Shewanella baltica (strain OS185)</name>
    <dbReference type="NCBI Taxonomy" id="402882"/>
    <lineage>
        <taxon>Bacteria</taxon>
        <taxon>Pseudomonadati</taxon>
        <taxon>Pseudomonadota</taxon>
        <taxon>Gammaproteobacteria</taxon>
        <taxon>Alteromonadales</taxon>
        <taxon>Shewanellaceae</taxon>
        <taxon>Shewanella</taxon>
    </lineage>
</organism>
<proteinExistence type="inferred from homology"/>
<keyword id="KW-0963">Cytoplasm</keyword>
<keyword id="KW-0238">DNA-binding</keyword>
<keyword id="KW-0677">Repeat</keyword>
<keyword id="KW-0804">Transcription</keyword>
<keyword id="KW-0805">Transcription regulation</keyword>
<dbReference type="EMBL" id="CP000753">
    <property type="protein sequence ID" value="ABS06561.1"/>
    <property type="molecule type" value="Genomic_DNA"/>
</dbReference>
<dbReference type="RefSeq" id="WP_011982222.1">
    <property type="nucleotide sequence ID" value="NC_009665.1"/>
</dbReference>
<dbReference type="SMR" id="A6WIC2"/>
<dbReference type="KEGG" id="sbm:Shew185_0392"/>
<dbReference type="HOGENOM" id="CLU_107907_2_0_6"/>
<dbReference type="GO" id="GO:0005737">
    <property type="term" value="C:cytoplasm"/>
    <property type="evidence" value="ECO:0007669"/>
    <property type="project" value="UniProtKB-UniRule"/>
</dbReference>
<dbReference type="GO" id="GO:0009295">
    <property type="term" value="C:nucleoid"/>
    <property type="evidence" value="ECO:0007669"/>
    <property type="project" value="UniProtKB-SubCell"/>
</dbReference>
<dbReference type="GO" id="GO:0003700">
    <property type="term" value="F:DNA-binding transcription factor activity"/>
    <property type="evidence" value="ECO:0007669"/>
    <property type="project" value="UniProtKB-UniRule"/>
</dbReference>
<dbReference type="GO" id="GO:0000976">
    <property type="term" value="F:transcription cis-regulatory region binding"/>
    <property type="evidence" value="ECO:0007669"/>
    <property type="project" value="TreeGrafter"/>
</dbReference>
<dbReference type="GO" id="GO:2000143">
    <property type="term" value="P:negative regulation of DNA-templated transcription initiation"/>
    <property type="evidence" value="ECO:0007669"/>
    <property type="project" value="TreeGrafter"/>
</dbReference>
<dbReference type="CDD" id="cd16321">
    <property type="entry name" value="MraZ_C"/>
    <property type="match status" value="1"/>
</dbReference>
<dbReference type="CDD" id="cd16320">
    <property type="entry name" value="MraZ_N"/>
    <property type="match status" value="1"/>
</dbReference>
<dbReference type="FunFam" id="3.40.1550.20:FF:000001">
    <property type="entry name" value="Transcriptional regulator MraZ"/>
    <property type="match status" value="1"/>
</dbReference>
<dbReference type="Gene3D" id="3.40.1550.20">
    <property type="entry name" value="Transcriptional regulator MraZ domain"/>
    <property type="match status" value="1"/>
</dbReference>
<dbReference type="HAMAP" id="MF_01008">
    <property type="entry name" value="MraZ"/>
    <property type="match status" value="1"/>
</dbReference>
<dbReference type="InterPro" id="IPR003444">
    <property type="entry name" value="MraZ"/>
</dbReference>
<dbReference type="InterPro" id="IPR035644">
    <property type="entry name" value="MraZ_C"/>
</dbReference>
<dbReference type="InterPro" id="IPR020603">
    <property type="entry name" value="MraZ_dom"/>
</dbReference>
<dbReference type="InterPro" id="IPR035642">
    <property type="entry name" value="MraZ_N"/>
</dbReference>
<dbReference type="InterPro" id="IPR038619">
    <property type="entry name" value="MraZ_sf"/>
</dbReference>
<dbReference type="InterPro" id="IPR007159">
    <property type="entry name" value="SpoVT-AbrB_dom"/>
</dbReference>
<dbReference type="InterPro" id="IPR037914">
    <property type="entry name" value="SpoVT-AbrB_sf"/>
</dbReference>
<dbReference type="NCBIfam" id="TIGR00242">
    <property type="entry name" value="division/cell wall cluster transcriptional repressor MraZ"/>
    <property type="match status" value="1"/>
</dbReference>
<dbReference type="PANTHER" id="PTHR34701">
    <property type="entry name" value="TRANSCRIPTIONAL REGULATOR MRAZ"/>
    <property type="match status" value="1"/>
</dbReference>
<dbReference type="PANTHER" id="PTHR34701:SF1">
    <property type="entry name" value="TRANSCRIPTIONAL REGULATOR MRAZ"/>
    <property type="match status" value="1"/>
</dbReference>
<dbReference type="Pfam" id="PF02381">
    <property type="entry name" value="MraZ"/>
    <property type="match status" value="2"/>
</dbReference>
<dbReference type="SUPFAM" id="SSF89447">
    <property type="entry name" value="AbrB/MazE/MraZ-like"/>
    <property type="match status" value="1"/>
</dbReference>
<dbReference type="PROSITE" id="PS51740">
    <property type="entry name" value="SPOVT_ABRB"/>
    <property type="match status" value="2"/>
</dbReference>
<protein>
    <recommendedName>
        <fullName>Transcriptional regulator MraZ</fullName>
    </recommendedName>
</protein>
<accession>A6WIC2</accession>
<feature type="chain" id="PRO_1000062930" description="Transcriptional regulator MraZ">
    <location>
        <begin position="1"/>
        <end position="152"/>
    </location>
</feature>
<feature type="domain" description="SpoVT-AbrB 1" evidence="2">
    <location>
        <begin position="5"/>
        <end position="52"/>
    </location>
</feature>
<feature type="domain" description="SpoVT-AbrB 2" evidence="2">
    <location>
        <begin position="81"/>
        <end position="124"/>
    </location>
</feature>
<evidence type="ECO:0000255" key="1">
    <source>
        <dbReference type="HAMAP-Rule" id="MF_01008"/>
    </source>
</evidence>
<evidence type="ECO:0000255" key="2">
    <source>
        <dbReference type="PROSITE-ProRule" id="PRU01076"/>
    </source>
</evidence>
<gene>
    <name evidence="1" type="primary">mraZ</name>
    <name type="ordered locus">Shew185_0392</name>
</gene>